<dbReference type="EC" id="2.3.1.47" evidence="1"/>
<dbReference type="EMBL" id="CP001133">
    <property type="protein sequence ID" value="ACH63668.1"/>
    <property type="molecule type" value="Genomic_DNA"/>
</dbReference>
<dbReference type="RefSeq" id="WP_012534852.1">
    <property type="nucleotide sequence ID" value="NC_011186.1"/>
</dbReference>
<dbReference type="SMR" id="B5EUP9"/>
<dbReference type="KEGG" id="vfm:VFMJ11_A0869"/>
<dbReference type="HOGENOM" id="CLU_015846_11_2_6"/>
<dbReference type="UniPathway" id="UPA00078"/>
<dbReference type="Proteomes" id="UP000001857">
    <property type="component" value="Chromosome II"/>
</dbReference>
<dbReference type="GO" id="GO:0008710">
    <property type="term" value="F:8-amino-7-oxononanoate synthase activity"/>
    <property type="evidence" value="ECO:0007669"/>
    <property type="project" value="UniProtKB-UniRule"/>
</dbReference>
<dbReference type="GO" id="GO:0030170">
    <property type="term" value="F:pyridoxal phosphate binding"/>
    <property type="evidence" value="ECO:0007669"/>
    <property type="project" value="UniProtKB-UniRule"/>
</dbReference>
<dbReference type="GO" id="GO:0009102">
    <property type="term" value="P:biotin biosynthetic process"/>
    <property type="evidence" value="ECO:0007669"/>
    <property type="project" value="UniProtKB-UniRule"/>
</dbReference>
<dbReference type="Gene3D" id="3.90.1150.10">
    <property type="entry name" value="Aspartate Aminotransferase, domain 1"/>
    <property type="match status" value="1"/>
</dbReference>
<dbReference type="Gene3D" id="3.40.640.10">
    <property type="entry name" value="Type I PLP-dependent aspartate aminotransferase-like (Major domain)"/>
    <property type="match status" value="1"/>
</dbReference>
<dbReference type="HAMAP" id="MF_01693">
    <property type="entry name" value="BioF_aminotrans_2"/>
    <property type="match status" value="1"/>
</dbReference>
<dbReference type="InterPro" id="IPR001917">
    <property type="entry name" value="Aminotrans_II_pyridoxalP_BS"/>
</dbReference>
<dbReference type="InterPro" id="IPR004839">
    <property type="entry name" value="Aminotransferase_I/II_large"/>
</dbReference>
<dbReference type="InterPro" id="IPR050087">
    <property type="entry name" value="AON_synthase_class-II"/>
</dbReference>
<dbReference type="InterPro" id="IPR004723">
    <property type="entry name" value="AONS_Archaea/Proteobacteria"/>
</dbReference>
<dbReference type="InterPro" id="IPR022834">
    <property type="entry name" value="AONS_Proteobacteria"/>
</dbReference>
<dbReference type="InterPro" id="IPR015424">
    <property type="entry name" value="PyrdxlP-dep_Trfase"/>
</dbReference>
<dbReference type="InterPro" id="IPR015421">
    <property type="entry name" value="PyrdxlP-dep_Trfase_major"/>
</dbReference>
<dbReference type="InterPro" id="IPR015422">
    <property type="entry name" value="PyrdxlP-dep_Trfase_small"/>
</dbReference>
<dbReference type="NCBIfam" id="TIGR00858">
    <property type="entry name" value="bioF"/>
    <property type="match status" value="1"/>
</dbReference>
<dbReference type="PANTHER" id="PTHR13693:SF100">
    <property type="entry name" value="8-AMINO-7-OXONONANOATE SYNTHASE"/>
    <property type="match status" value="1"/>
</dbReference>
<dbReference type="PANTHER" id="PTHR13693">
    <property type="entry name" value="CLASS II AMINOTRANSFERASE/8-AMINO-7-OXONONANOATE SYNTHASE"/>
    <property type="match status" value="1"/>
</dbReference>
<dbReference type="Pfam" id="PF00155">
    <property type="entry name" value="Aminotran_1_2"/>
    <property type="match status" value="1"/>
</dbReference>
<dbReference type="SUPFAM" id="SSF53383">
    <property type="entry name" value="PLP-dependent transferases"/>
    <property type="match status" value="1"/>
</dbReference>
<dbReference type="PROSITE" id="PS00599">
    <property type="entry name" value="AA_TRANSFER_CLASS_2"/>
    <property type="match status" value="1"/>
</dbReference>
<sequence>MKQAFNQRIRSALNQRKQAGLNRSRRVVSQGNQATLVVDGKSYLNFSGNDYLGLASSKELMEAWQEGLSLYGSGSGASPLVTGYSKPHANLESQLAEWLGFDCAILFNSGFSANQAVLFSLLEKGDTLLQDKLNHASLMEAGMLSPAVMKRFKHNDVGHLKSLLKRSSDEPTLVVTEGVFSMDGDLSPLADIATLTKENDAWLMVDDAHGCGVLGSNGKGCCDVHSITPDILIVTFGKGFGLSGAAVLCNQECGDYLSQFARHHVYSTAMPPAQAHALSHALLMIQQQEWRRDKLKELNQQFESELMNFVGAEKTPTPIKPIIIGEATDAMILADSLKERGLWTTAIRPPTVPVSSARIRVTLSANHSSADISALTQAINELG</sequence>
<name>BIOF_ALIFM</name>
<keyword id="KW-0093">Biotin biosynthesis</keyword>
<keyword id="KW-0663">Pyridoxal phosphate</keyword>
<keyword id="KW-0808">Transferase</keyword>
<reference key="1">
    <citation type="submission" date="2008-08" db="EMBL/GenBank/DDBJ databases">
        <title>Complete sequence of Vibrio fischeri strain MJ11.</title>
        <authorList>
            <person name="Mandel M.J."/>
            <person name="Stabb E.V."/>
            <person name="Ruby E.G."/>
            <person name="Ferriera S."/>
            <person name="Johnson J."/>
            <person name="Kravitz S."/>
            <person name="Beeson K."/>
            <person name="Sutton G."/>
            <person name="Rogers Y.-H."/>
            <person name="Friedman R."/>
            <person name="Frazier M."/>
            <person name="Venter J.C."/>
        </authorList>
    </citation>
    <scope>NUCLEOTIDE SEQUENCE [LARGE SCALE GENOMIC DNA]</scope>
    <source>
        <strain>MJ11</strain>
    </source>
</reference>
<comment type="function">
    <text evidence="1">Catalyzes the decarboxylative condensation of pimeloyl-[acyl-carrier protein] and L-alanine to produce 8-amino-7-oxononanoate (AON), [acyl-carrier protein], and carbon dioxide.</text>
</comment>
<comment type="catalytic activity">
    <reaction evidence="1">
        <text>6-carboxyhexanoyl-[ACP] + L-alanine + H(+) = (8S)-8-amino-7-oxononanoate + holo-[ACP] + CO2</text>
        <dbReference type="Rhea" id="RHEA:42288"/>
        <dbReference type="Rhea" id="RHEA-COMP:9685"/>
        <dbReference type="Rhea" id="RHEA-COMP:9955"/>
        <dbReference type="ChEBI" id="CHEBI:15378"/>
        <dbReference type="ChEBI" id="CHEBI:16526"/>
        <dbReference type="ChEBI" id="CHEBI:57972"/>
        <dbReference type="ChEBI" id="CHEBI:64479"/>
        <dbReference type="ChEBI" id="CHEBI:78846"/>
        <dbReference type="ChEBI" id="CHEBI:149468"/>
        <dbReference type="EC" id="2.3.1.47"/>
    </reaction>
</comment>
<comment type="cofactor">
    <cofactor evidence="1">
        <name>pyridoxal 5'-phosphate</name>
        <dbReference type="ChEBI" id="CHEBI:597326"/>
    </cofactor>
</comment>
<comment type="pathway">
    <text evidence="1">Cofactor biosynthesis; biotin biosynthesis.</text>
</comment>
<comment type="subunit">
    <text evidence="1">Homodimer.</text>
</comment>
<comment type="similarity">
    <text evidence="1">Belongs to the class-II pyridoxal-phosphate-dependent aminotransferase family. BioF subfamily.</text>
</comment>
<evidence type="ECO:0000255" key="1">
    <source>
        <dbReference type="HAMAP-Rule" id="MF_01693"/>
    </source>
</evidence>
<accession>B5EUP9</accession>
<gene>
    <name evidence="1" type="primary">bioF</name>
    <name type="ordered locus">VFMJ11_A0869</name>
</gene>
<protein>
    <recommendedName>
        <fullName evidence="1">8-amino-7-oxononanoate synthase</fullName>
        <shortName evidence="1">AONS</shortName>
        <ecNumber evidence="1">2.3.1.47</ecNumber>
    </recommendedName>
    <alternativeName>
        <fullName evidence="1">7-keto-8-amino-pelargonic acid synthase</fullName>
        <shortName evidence="1">7-KAP synthase</shortName>
        <shortName evidence="1">KAPA synthase</shortName>
    </alternativeName>
    <alternativeName>
        <fullName evidence="1">8-amino-7-ketopelargonate synthase</fullName>
    </alternativeName>
</protein>
<feature type="chain" id="PRO_0000381134" description="8-amino-7-oxononanoate synthase">
    <location>
        <begin position="1"/>
        <end position="383"/>
    </location>
</feature>
<feature type="binding site" evidence="1">
    <location>
        <position position="23"/>
    </location>
    <ligand>
        <name>substrate</name>
    </ligand>
</feature>
<feature type="binding site" evidence="1">
    <location>
        <begin position="110"/>
        <end position="111"/>
    </location>
    <ligand>
        <name>pyridoxal 5'-phosphate</name>
        <dbReference type="ChEBI" id="CHEBI:597326"/>
    </ligand>
</feature>
<feature type="binding site" evidence="1">
    <location>
        <position position="135"/>
    </location>
    <ligand>
        <name>substrate</name>
    </ligand>
</feature>
<feature type="binding site" evidence="1">
    <location>
        <position position="181"/>
    </location>
    <ligand>
        <name>pyridoxal 5'-phosphate</name>
        <dbReference type="ChEBI" id="CHEBI:597326"/>
    </ligand>
</feature>
<feature type="binding site" evidence="1">
    <location>
        <position position="209"/>
    </location>
    <ligand>
        <name>pyridoxal 5'-phosphate</name>
        <dbReference type="ChEBI" id="CHEBI:597326"/>
    </ligand>
</feature>
<feature type="binding site" evidence="1">
    <location>
        <position position="235"/>
    </location>
    <ligand>
        <name>pyridoxal 5'-phosphate</name>
        <dbReference type="ChEBI" id="CHEBI:597326"/>
    </ligand>
</feature>
<feature type="binding site" evidence="1">
    <location>
        <position position="351"/>
    </location>
    <ligand>
        <name>substrate</name>
    </ligand>
</feature>
<feature type="modified residue" description="N6-(pyridoxal phosphate)lysine" evidence="1">
    <location>
        <position position="238"/>
    </location>
</feature>
<proteinExistence type="inferred from homology"/>
<organism>
    <name type="scientific">Aliivibrio fischeri (strain MJ11)</name>
    <name type="common">Vibrio fischeri</name>
    <dbReference type="NCBI Taxonomy" id="388396"/>
    <lineage>
        <taxon>Bacteria</taxon>
        <taxon>Pseudomonadati</taxon>
        <taxon>Pseudomonadota</taxon>
        <taxon>Gammaproteobacteria</taxon>
        <taxon>Vibrionales</taxon>
        <taxon>Vibrionaceae</taxon>
        <taxon>Aliivibrio</taxon>
    </lineage>
</organism>